<reference key="1">
    <citation type="journal article" date="1995" name="Genomics">
        <title>Identification of four novel human genes amplified and overexpressed in breast carcinoma and localized to the q11-q21.3 region of chromosome 17.</title>
        <authorList>
            <person name="Tomasetto C.L."/>
            <person name="Regnier C.H."/>
            <person name="Moog-Lutz C."/>
            <person name="Mattei M.-G."/>
            <person name="Chenard M.-P."/>
            <person name="Lidereau R."/>
            <person name="Basset P."/>
            <person name="Rio M.-C."/>
        </authorList>
    </citation>
    <scope>NUCLEOTIDE SEQUENCE [MRNA] (ISOFORM 1)</scope>
    <scope>VARIANT GLN-117</scope>
    <source>
        <tissue>Mammary carcinoma</tissue>
    </source>
</reference>
<reference key="2">
    <citation type="journal article" date="1997" name="Cancer Res.">
        <title>Isolation of a candidate gene, CAB1, for cholesterol transport to mitochondria from the c-ERBB-2 amplicon by a modified cDNA selection method.</title>
        <authorList>
            <person name="Akiyama N."/>
            <person name="Sasaki H."/>
            <person name="Ishizuka T."/>
            <person name="Kishi T."/>
            <person name="Sakamoto H."/>
            <person name="Onda M."/>
            <person name="Hirai H."/>
            <person name="Yazaki Y."/>
            <person name="Sugimura T."/>
            <person name="Terada M."/>
        </authorList>
    </citation>
    <scope>NUCLEOTIDE SEQUENCE [MRNA] (ISOFORM 1)</scope>
    <scope>VARIANT GLN-117</scope>
    <source>
        <tissue>Esophageal carcinoma</tissue>
    </source>
</reference>
<reference key="3">
    <citation type="submission" date="2003-05" db="EMBL/GenBank/DDBJ databases">
        <title>Cloning of human full-length CDSs in BD Creator(TM) system donor vector.</title>
        <authorList>
            <person name="Kalnine N."/>
            <person name="Chen X."/>
            <person name="Rolfs A."/>
            <person name="Halleck A."/>
            <person name="Hines L."/>
            <person name="Eisenstein S."/>
            <person name="Koundinya M."/>
            <person name="Raphael J."/>
            <person name="Moreira D."/>
            <person name="Kelley T."/>
            <person name="LaBaer J."/>
            <person name="Lin Y."/>
            <person name="Phelan M."/>
            <person name="Farmer A."/>
        </authorList>
    </citation>
    <scope>NUCLEOTIDE SEQUENCE [LARGE SCALE MRNA] (ISOFORM 1)</scope>
    <scope>VARIANT GLN-117</scope>
</reference>
<reference key="4">
    <citation type="journal article" date="2004" name="Nat. Genet.">
        <title>Complete sequencing and characterization of 21,243 full-length human cDNAs.</title>
        <authorList>
            <person name="Ota T."/>
            <person name="Suzuki Y."/>
            <person name="Nishikawa T."/>
            <person name="Otsuki T."/>
            <person name="Sugiyama T."/>
            <person name="Irie R."/>
            <person name="Wakamatsu A."/>
            <person name="Hayashi K."/>
            <person name="Sato H."/>
            <person name="Nagai K."/>
            <person name="Kimura K."/>
            <person name="Makita H."/>
            <person name="Sekine M."/>
            <person name="Obayashi M."/>
            <person name="Nishi T."/>
            <person name="Shibahara T."/>
            <person name="Tanaka T."/>
            <person name="Ishii S."/>
            <person name="Yamamoto J."/>
            <person name="Saito K."/>
            <person name="Kawai Y."/>
            <person name="Isono Y."/>
            <person name="Nakamura Y."/>
            <person name="Nagahari K."/>
            <person name="Murakami K."/>
            <person name="Yasuda T."/>
            <person name="Iwayanagi T."/>
            <person name="Wagatsuma M."/>
            <person name="Shiratori A."/>
            <person name="Sudo H."/>
            <person name="Hosoiri T."/>
            <person name="Kaku Y."/>
            <person name="Kodaira H."/>
            <person name="Kondo H."/>
            <person name="Sugawara M."/>
            <person name="Takahashi M."/>
            <person name="Kanda K."/>
            <person name="Yokoi T."/>
            <person name="Furuya T."/>
            <person name="Kikkawa E."/>
            <person name="Omura Y."/>
            <person name="Abe K."/>
            <person name="Kamihara K."/>
            <person name="Katsuta N."/>
            <person name="Sato K."/>
            <person name="Tanikawa M."/>
            <person name="Yamazaki M."/>
            <person name="Ninomiya K."/>
            <person name="Ishibashi T."/>
            <person name="Yamashita H."/>
            <person name="Murakawa K."/>
            <person name="Fujimori K."/>
            <person name="Tanai H."/>
            <person name="Kimata M."/>
            <person name="Watanabe M."/>
            <person name="Hiraoka S."/>
            <person name="Chiba Y."/>
            <person name="Ishida S."/>
            <person name="Ono Y."/>
            <person name="Takiguchi S."/>
            <person name="Watanabe S."/>
            <person name="Yosida M."/>
            <person name="Hotuta T."/>
            <person name="Kusano J."/>
            <person name="Kanehori K."/>
            <person name="Takahashi-Fujii A."/>
            <person name="Hara H."/>
            <person name="Tanase T.-O."/>
            <person name="Nomura Y."/>
            <person name="Togiya S."/>
            <person name="Komai F."/>
            <person name="Hara R."/>
            <person name="Takeuchi K."/>
            <person name="Arita M."/>
            <person name="Imose N."/>
            <person name="Musashino K."/>
            <person name="Yuuki H."/>
            <person name="Oshima A."/>
            <person name="Sasaki N."/>
            <person name="Aotsuka S."/>
            <person name="Yoshikawa Y."/>
            <person name="Matsunawa H."/>
            <person name="Ichihara T."/>
            <person name="Shiohata N."/>
            <person name="Sano S."/>
            <person name="Moriya S."/>
            <person name="Momiyama H."/>
            <person name="Satoh N."/>
            <person name="Takami S."/>
            <person name="Terashima Y."/>
            <person name="Suzuki O."/>
            <person name="Nakagawa S."/>
            <person name="Senoh A."/>
            <person name="Mizoguchi H."/>
            <person name="Goto Y."/>
            <person name="Shimizu F."/>
            <person name="Wakebe H."/>
            <person name="Hishigaki H."/>
            <person name="Watanabe T."/>
            <person name="Sugiyama A."/>
            <person name="Takemoto M."/>
            <person name="Kawakami B."/>
            <person name="Yamazaki M."/>
            <person name="Watanabe K."/>
            <person name="Kumagai A."/>
            <person name="Itakura S."/>
            <person name="Fukuzumi Y."/>
            <person name="Fujimori Y."/>
            <person name="Komiyama M."/>
            <person name="Tashiro H."/>
            <person name="Tanigami A."/>
            <person name="Fujiwara T."/>
            <person name="Ono T."/>
            <person name="Yamada K."/>
            <person name="Fujii Y."/>
            <person name="Ozaki K."/>
            <person name="Hirao M."/>
            <person name="Ohmori Y."/>
            <person name="Kawabata A."/>
            <person name="Hikiji T."/>
            <person name="Kobatake N."/>
            <person name="Inagaki H."/>
            <person name="Ikema Y."/>
            <person name="Okamoto S."/>
            <person name="Okitani R."/>
            <person name="Kawakami T."/>
            <person name="Noguchi S."/>
            <person name="Itoh T."/>
            <person name="Shigeta K."/>
            <person name="Senba T."/>
            <person name="Matsumura K."/>
            <person name="Nakajima Y."/>
            <person name="Mizuno T."/>
            <person name="Morinaga M."/>
            <person name="Sasaki M."/>
            <person name="Togashi T."/>
            <person name="Oyama M."/>
            <person name="Hata H."/>
            <person name="Watanabe M."/>
            <person name="Komatsu T."/>
            <person name="Mizushima-Sugano J."/>
            <person name="Satoh T."/>
            <person name="Shirai Y."/>
            <person name="Takahashi Y."/>
            <person name="Nakagawa K."/>
            <person name="Okumura K."/>
            <person name="Nagase T."/>
            <person name="Nomura N."/>
            <person name="Kikuchi H."/>
            <person name="Masuho Y."/>
            <person name="Yamashita R."/>
            <person name="Nakai K."/>
            <person name="Yada T."/>
            <person name="Nakamura Y."/>
            <person name="Ohara O."/>
            <person name="Isogai T."/>
            <person name="Sugano S."/>
        </authorList>
    </citation>
    <scope>NUCLEOTIDE SEQUENCE [LARGE SCALE MRNA] (ISOFORMS 2 AND 3)</scope>
    <scope>VARIANT GLN-117</scope>
    <source>
        <tissue>Placenta</tissue>
        <tissue>Small intestine</tissue>
    </source>
</reference>
<reference key="5">
    <citation type="journal article" date="2006" name="Nature">
        <title>DNA sequence of human chromosome 17 and analysis of rearrangement in the human lineage.</title>
        <authorList>
            <person name="Zody M.C."/>
            <person name="Garber M."/>
            <person name="Adams D.J."/>
            <person name="Sharpe T."/>
            <person name="Harrow J."/>
            <person name="Lupski J.R."/>
            <person name="Nicholson C."/>
            <person name="Searle S.M."/>
            <person name="Wilming L."/>
            <person name="Young S.K."/>
            <person name="Abouelleil A."/>
            <person name="Allen N.R."/>
            <person name="Bi W."/>
            <person name="Bloom T."/>
            <person name="Borowsky M.L."/>
            <person name="Bugalter B.E."/>
            <person name="Butler J."/>
            <person name="Chang J.L."/>
            <person name="Chen C.-K."/>
            <person name="Cook A."/>
            <person name="Corum B."/>
            <person name="Cuomo C.A."/>
            <person name="de Jong P.J."/>
            <person name="DeCaprio D."/>
            <person name="Dewar K."/>
            <person name="FitzGerald M."/>
            <person name="Gilbert J."/>
            <person name="Gibson R."/>
            <person name="Gnerre S."/>
            <person name="Goldstein S."/>
            <person name="Grafham D.V."/>
            <person name="Grocock R."/>
            <person name="Hafez N."/>
            <person name="Hagopian D.S."/>
            <person name="Hart E."/>
            <person name="Norman C.H."/>
            <person name="Humphray S."/>
            <person name="Jaffe D.B."/>
            <person name="Jones M."/>
            <person name="Kamal M."/>
            <person name="Khodiyar V.K."/>
            <person name="LaButti K."/>
            <person name="Laird G."/>
            <person name="Lehoczky J."/>
            <person name="Liu X."/>
            <person name="Lokyitsang T."/>
            <person name="Loveland J."/>
            <person name="Lui A."/>
            <person name="Macdonald P."/>
            <person name="Major J.E."/>
            <person name="Matthews L."/>
            <person name="Mauceli E."/>
            <person name="McCarroll S.A."/>
            <person name="Mihalev A.H."/>
            <person name="Mudge J."/>
            <person name="Nguyen C."/>
            <person name="Nicol R."/>
            <person name="O'Leary S.B."/>
            <person name="Osoegawa K."/>
            <person name="Schwartz D.C."/>
            <person name="Shaw-Smith C."/>
            <person name="Stankiewicz P."/>
            <person name="Steward C."/>
            <person name="Swarbreck D."/>
            <person name="Venkataraman V."/>
            <person name="Whittaker C.A."/>
            <person name="Yang X."/>
            <person name="Zimmer A.R."/>
            <person name="Bradley A."/>
            <person name="Hubbard T."/>
            <person name="Birren B.W."/>
            <person name="Rogers J."/>
            <person name="Lander E.S."/>
            <person name="Nusbaum C."/>
        </authorList>
    </citation>
    <scope>NUCLEOTIDE SEQUENCE [LARGE SCALE GENOMIC DNA]</scope>
</reference>
<reference key="6">
    <citation type="journal article" date="2004" name="Genome Res.">
        <title>The status, quality, and expansion of the NIH full-length cDNA project: the Mammalian Gene Collection (MGC).</title>
        <authorList>
            <consortium name="The MGC Project Team"/>
        </authorList>
    </citation>
    <scope>NUCLEOTIDE SEQUENCE [LARGE SCALE MRNA] (ISOFORM 1)</scope>
    <scope>VARIANTS GLN-117 AND ALA-216</scope>
    <source>
        <tissue>Lung</tissue>
        <tissue>Skin</tissue>
        <tissue>Spleen</tissue>
    </source>
</reference>
<reference key="7">
    <citation type="journal article" date="2001" name="J. Biol. Chem.">
        <title>The steroidogenic acute regulatory protein homolog MLN64, a late endosomal cholesterol-binding protein.</title>
        <authorList>
            <person name="Alpy F."/>
            <person name="Stoeckel M.-E."/>
            <person name="Dierich A."/>
            <person name="Escola J.-M."/>
            <person name="Wendling C."/>
            <person name="Chenard M.-P."/>
            <person name="Vanier M.T."/>
            <person name="Gruenberg J."/>
            <person name="Tomasetto C."/>
            <person name="Rio M.-C."/>
        </authorList>
    </citation>
    <scope>FUNCTION</scope>
    <scope>SUBCELLULAR LOCATION</scope>
    <scope>TOPOLOGY</scope>
    <scope>DOMAIN</scope>
    <scope>MUTAGENESIS OF 66-LEU-LEU-67; TYR-89; TYR-113; ASN-219 AND ASN-311</scope>
</reference>
<reference key="8">
    <citation type="journal article" date="2002" name="J. Biol. Chem.">
        <title>MLN64 mediates mobilization of lysosomal cholesterol to steroidogenic mitochondria.</title>
        <authorList>
            <person name="Zhang M."/>
            <person name="Liu P."/>
            <person name="Dwyer N.K."/>
            <person name="Christenson L.K."/>
            <person name="Fujimoto T."/>
            <person name="Martinez F."/>
            <person name="Comly M."/>
            <person name="Hanover J.A."/>
            <person name="Blanchette-Mackie E.J."/>
            <person name="Strauss J.F. III"/>
        </authorList>
    </citation>
    <scope>FUNCTION</scope>
</reference>
<reference key="9">
    <citation type="journal article" date="2005" name="J. Biol. Chem.">
        <title>Functional characterization of the MENTAL domain.</title>
        <authorList>
            <person name="Alpy F."/>
            <person name="Latchumanan V.K."/>
            <person name="Kedinger V."/>
            <person name="Janoshazi A."/>
            <person name="Thiele C."/>
            <person name="Wendling C."/>
            <person name="Rio M.C."/>
            <person name="Tomasetto C."/>
        </authorList>
    </citation>
    <scope>SUBUNIT</scope>
    <scope>INTERACTION WITH STARD3NL</scope>
    <scope>DOMAIN</scope>
</reference>
<reference key="10">
    <citation type="journal article" date="2005" name="Mol. Biol. Cell">
        <title>MLN64 is involved in actin-mediated dynamics of late endocytic organelles.</title>
        <authorList>
            <person name="Hoelttae-Vuori M."/>
            <person name="Alpy F."/>
            <person name="Tanhuanpaeae K."/>
            <person name="Jokitalo E."/>
            <person name="Mutka A.L."/>
            <person name="Ikonen E."/>
        </authorList>
    </citation>
    <scope>FUNCTION</scope>
</reference>
<reference key="11">
    <citation type="journal article" date="2006" name="Biochem. Soc. Trans.">
        <title>MLN64 and MENTHO, two mediators of endosomal cholesterol transport.</title>
        <authorList>
            <person name="Alpy F."/>
            <person name="Tomasetto C."/>
        </authorList>
    </citation>
    <scope>SUBCELLULAR LOCATION</scope>
    <scope>SUBUNIT</scope>
    <scope>INTERACTION WITH STARD3NL</scope>
    <scope>DOMAIN</scope>
</reference>
<reference key="12">
    <citation type="journal article" date="2006" name="J. Lipid Res.">
        <title>Modeling the structure of the StART domains of MLN64 and StAR proteins in complex with cholesterol.</title>
        <authorList>
            <person name="Murcia M."/>
            <person name="Faraldo-Gomez J.D."/>
            <person name="Maxfield F.R."/>
            <person name="Roux B."/>
        </authorList>
    </citation>
    <scope>3D-STRUCTURE MODELING</scope>
</reference>
<reference key="13">
    <citation type="journal article" date="2010" name="J. Lipid Res.">
        <title>MLN64 mediates egress of cholesterol from endosomes to mitochondria in the absence of functional Niemann-Pick Type C1 protein.</title>
        <authorList>
            <person name="Charman M."/>
            <person name="Kennedy B.E."/>
            <person name="Osborne N."/>
            <person name="Karten B."/>
        </authorList>
    </citation>
    <scope>FUNCTION</scope>
</reference>
<reference key="14">
    <citation type="journal article" date="2011" name="Biochemistry">
        <title>Identification of StARD3 as a lutein-binding protein in the macula of the primate retina.</title>
        <authorList>
            <person name="Li B."/>
            <person name="Vachali P."/>
            <person name="Frederick J.M."/>
            <person name="Bernstein P.S."/>
        </authorList>
    </citation>
    <scope>FUNCTION</scope>
    <scope>TISSUE SPECIFICITY</scope>
</reference>
<reference key="15">
    <citation type="journal article" date="2012" name="PLoS ONE">
        <title>MLN64 transport to the late endosome is regulated by binding to 14-3-3 via a non-canonical binding site.</title>
        <authorList>
            <person name="Liapis A."/>
            <person name="Chen F.W."/>
            <person name="Davies J.P."/>
            <person name="Wang R."/>
            <person name="Ioannou Y.A."/>
        </authorList>
    </citation>
    <scope>FUNCTION</scope>
</reference>
<reference key="16">
    <citation type="journal article" date="2013" name="J. Cell Sci.">
        <title>STARD3 or STARD3NL and VAP form a novel molecular tether between late endosomes and the ER.</title>
        <authorList>
            <person name="Alpy F."/>
            <person name="Rousseau A."/>
            <person name="Schwab Y."/>
            <person name="Legueux F."/>
            <person name="Stoll I."/>
            <person name="Wendling C."/>
            <person name="Spiegelhalter C."/>
            <person name="Kessler P."/>
            <person name="Mathelin C."/>
            <person name="Rio M.C."/>
            <person name="Levine T.P."/>
            <person name="Tomasetto C."/>
        </authorList>
    </citation>
    <scope>FUNCTION</scope>
    <scope>SUBCELLULAR LOCATION</scope>
    <scope>INTERACTION WITH VAPA AND VAPB</scope>
    <scope>MUTAGENESIS OF 206-GLN--GLU-211</scope>
    <scope>FFAT MOTIF</scope>
    <scope>DOMAIN</scope>
</reference>
<reference key="17">
    <citation type="journal article" date="2016" name="Protein Cell">
        <title>The role of endosomal cholesterol trafficking protein, StAR-related lipid transfer domain 3 (StarD3/MLN64), in BRIN-BD11 insulinoma cells.</title>
        <authorList>
            <person name="Pinto J.B."/>
            <person name="Graham A."/>
        </authorList>
    </citation>
    <scope>INDUCTION</scope>
</reference>
<reference key="18">
    <citation type="journal article" date="2017" name="EMBO J.">
        <title>STARD3 mediates endoplasmic reticulum-to-endosome cholesterol transport at membrane contact sites.</title>
        <authorList>
            <person name="Wilhelm L.P."/>
            <person name="Wendling C."/>
            <person name="Vedie B."/>
            <person name="Kobayashi T."/>
            <person name="Chenard M.P."/>
            <person name="Tomasetto C."/>
            <person name="Drin G."/>
            <person name="Alpy F."/>
        </authorList>
    </citation>
    <scope>FUNCTION</scope>
    <scope>SUBCELLULAR LOCATION</scope>
    <scope>INTERACTION WITH VAPA AND VAPB</scope>
    <scope>LIPID-BINDING</scope>
    <scope>MUTAGENESIS OF 207-PHE-TYR-208 AND 307-MET--ASN-311</scope>
</reference>
<reference key="19">
    <citation type="journal article" date="2018" name="EMBO Rep.">
        <title>Identification of MOSPD2, a novel scaffold for endoplasmic reticulum membrane contact sites.</title>
        <authorList>
            <person name="Di Mattia T."/>
            <person name="Wilhelm L.P."/>
            <person name="Ikhlef S."/>
            <person name="Wendling C."/>
            <person name="Spehner D."/>
            <person name="Nomine Y."/>
            <person name="Giordano F."/>
            <person name="Mathelin C."/>
            <person name="Drin G."/>
            <person name="Tomasetto C."/>
            <person name="Alpy F."/>
        </authorList>
    </citation>
    <scope>IDENTIFICATION BY MASS SPECTROMETRY</scope>
    <scope>INTERACTION WITH MOSPD2</scope>
    <scope>SUBCELLULAR LOCATION</scope>
    <scope>DOMAIN</scope>
    <scope>MUTAGENESIS OF 207-PHE-TYR-208</scope>
</reference>
<reference evidence="30" key="20">
    <citation type="journal article" date="2000" name="Nat. Struct. Biol.">
        <title>Structure and lipid transport mechanism of a StAR-related domain.</title>
        <authorList>
            <person name="Tsujishita Y."/>
            <person name="Hurley J.H."/>
        </authorList>
    </citation>
    <scope>X-RAY CRYSTALLOGRAPHY (2.2 ANGSTROMS) OF 216-445</scope>
</reference>
<reference evidence="31" key="21">
    <citation type="journal article" date="2016" name="Acta Crystallogr. F">
        <title>Structure of the lutein-binding domain of human StARD3 at 1.74A resolution and model of a complex with lutein.</title>
        <authorList>
            <person name="Horvath M.P."/>
            <person name="George E.W."/>
            <person name="Tran Q.T."/>
            <person name="Baumgardner K."/>
            <person name="Zharov G."/>
            <person name="Lee S."/>
            <person name="Sharifzadeh H."/>
            <person name="Shihab S."/>
            <person name="Mattinson T."/>
            <person name="Li B."/>
            <person name="Bernstein P.S."/>
        </authorList>
    </citation>
    <scope>X-RAY CRYSTALLOGRAPHY (1.74 ANGSTROMS) OF 216-444</scope>
</reference>
<reference evidence="32 33" key="22">
    <citation type="journal article" date="2020" name="EMBO J.">
        <title>FFAT motif phosphorylation controls formation and lipid transfer function of inter-organelle contacts.</title>
        <authorList>
            <person name="Di Mattia T."/>
            <person name="Martinet A."/>
            <person name="Ikhlef S."/>
            <person name="McEwen A.G."/>
            <person name="Nomine Y."/>
            <person name="Wendling C."/>
            <person name="Poussin-Courmontagne P."/>
            <person name="Voilquin L."/>
            <person name="Eberling P."/>
            <person name="Ruffenach F."/>
            <person name="Cavarelli J."/>
            <person name="Slee J."/>
            <person name="Levine T.P."/>
            <person name="Drin G."/>
            <person name="Tomasetto C."/>
            <person name="Alpy F."/>
        </authorList>
    </citation>
    <scope>X-RAY CRYSTALLOGRAPHY (1.85 ANGSTROMS) OF 200-216 IN COMPLEX WITH THE MSP DOMAIN OF VAPA AND MOSPD2</scope>
    <scope>FUNCTION</scope>
    <scope>IDENTIFICATION BY MASS SPECTROMETRY</scope>
    <scope>PHOSPHORYLATION AT SER-209</scope>
    <scope>INTERACTION WITH VAPA; VAPB AND MOSPD2</scope>
    <scope>MUTAGENESIS OF SER-209 AND PRO-210</scope>
    <scope>FFAT MOTIF</scope>
</reference>
<proteinExistence type="evidence at protein level"/>
<name>STAR3_HUMAN</name>
<sequence>MSKLPRELTRDLERSLPAVASLGSSLSHSQSLSSHLLPPPEKRRAISDVRRTFCLFVTFDLLFISLLWIIELNTNTGIRKNLEQEIIQYNFKTSFFDIFVLAFFRFSGLLLGYAVLRLRHWWVIAVTTLVSSAFLIVKVILSELLSKGAFGYLLPIVSFVLAWLETWFLDFKVLPQEAEEERWYLAAQVAVARGPLLFSGALSEGQFYSPPESFAGSDNESDEEVAGKKSFSAQEREYIRQGKEATAVVDQILAQEENWKFEKNNEYGDTVYTIEVPFHGKTFILKTFLPCPAELVYQEVILQPERMVLWNKTVTACQILQRVEDNTLISYDVSAGAAGGVVSPRDFVNVRRIERRRDRYLSSGIATSHSAKPPTHKYVRGENGPGGFIVLKSASNPRVCTFVWILNTDLKGRLPRYLIHQSLAATMFEFAFHLRQRISELGARA</sequence>
<feature type="chain" id="PRO_0000220653" description="StAR-related lipid transfer protein 3">
    <location>
        <begin position="1"/>
        <end position="445"/>
    </location>
</feature>
<feature type="topological domain" description="Cytoplasmic" evidence="27">
    <location>
        <begin position="1"/>
        <end position="51"/>
    </location>
</feature>
<feature type="transmembrane region" description="Helical" evidence="3">
    <location>
        <begin position="52"/>
        <end position="72"/>
    </location>
</feature>
<feature type="topological domain" description="Extracellular" evidence="1">
    <location>
        <begin position="73"/>
        <end position="94"/>
    </location>
</feature>
<feature type="transmembrane region" description="Helical" evidence="3">
    <location>
        <begin position="95"/>
        <end position="115"/>
    </location>
</feature>
<feature type="topological domain" description="Cytoplasmic" evidence="1">
    <location>
        <begin position="116"/>
        <end position="120"/>
    </location>
</feature>
<feature type="transmembrane region" description="Helical" evidence="3">
    <location>
        <begin position="121"/>
        <end position="141"/>
    </location>
</feature>
<feature type="topological domain" description="Extracellular" evidence="1">
    <location>
        <begin position="142"/>
        <end position="148"/>
    </location>
</feature>
<feature type="transmembrane region" description="Helical" evidence="3">
    <location>
        <begin position="149"/>
        <end position="169"/>
    </location>
</feature>
<feature type="topological domain" description="Cytoplasmic" evidence="27">
    <location>
        <begin position="170"/>
        <end position="445"/>
    </location>
</feature>
<feature type="domain" description="MENTAL" evidence="3">
    <location>
        <begin position="46"/>
        <end position="217"/>
    </location>
</feature>
<feature type="domain" description="START" evidence="2">
    <location>
        <begin position="230"/>
        <end position="443"/>
    </location>
</feature>
<feature type="short sequence motif" description="FFAT" evidence="14 18">
    <location>
        <begin position="206"/>
        <end position="212"/>
    </location>
</feature>
<feature type="modified residue" description="Phosphoserine" evidence="18">
    <location>
        <position position="209"/>
    </location>
</feature>
<feature type="splice variant" id="VSP_045361" description="In isoform 3." evidence="23">
    <original>WVIAVTTLVSSAFLIVKVILSELLSKGAFGYLLPIVSFVLAWLETWFLDFKVLPQEAEEERW</original>
    <variation>SRRWCPVHSSLSRSSSLSCSAKGHLATCSPSSLLSSPGWRPGSLTSKSYPRKLKRSDSAPPG</variation>
    <location>
        <begin position="122"/>
        <end position="183"/>
    </location>
</feature>
<feature type="splice variant" id="VSP_042710" description="In isoform 2." evidence="23">
    <location>
        <begin position="126"/>
        <end position="143"/>
    </location>
</feature>
<feature type="sequence variant" id="VAR_027877" description="In dbSNP:rs1877031." evidence="6 7 19 20 21">
    <original>R</original>
    <variation>Q</variation>
    <location>
        <position position="117"/>
    </location>
</feature>
<feature type="sequence variant" id="VAR_027878" description="In dbSNP:rs11556624." evidence="7">
    <original>G</original>
    <variation>A</variation>
    <location>
        <position position="216"/>
    </location>
</feature>
<feature type="mutagenesis site" description="Abolishes localization to late endosomes and leads to mislocalization to the endoplasmic reticulum." evidence="4">
    <original>LL</original>
    <variation>AS</variation>
    <location>
        <begin position="66"/>
        <end position="67"/>
    </location>
</feature>
<feature type="mutagenesis site" description="Abolishes localization to late endosomes and leads to mislocalization to the endoplasmic reticulum." evidence="4">
    <original>Y</original>
    <variation>V</variation>
    <location>
        <position position="89"/>
    </location>
</feature>
<feature type="mutagenesis site" description="Does not affect localization to late endosomes." evidence="4">
    <original>Y</original>
    <variation>A</variation>
    <location>
        <position position="113"/>
    </location>
</feature>
<feature type="mutagenesis site" description="Abolishes interaction with VAPA and VAPB, thereby preventing contact with the endoplasmic reticulum membrane." evidence="14">
    <location>
        <begin position="206"/>
        <end position="212"/>
    </location>
</feature>
<feature type="mutagenesis site" description="Abolishes interaction with VAPA, VAPB and MOSPD2, thereby preventing contact with the endoplasmic reticulum membrane. Abolishes cholesterol accumulation in endosomes." evidence="16 17">
    <original>FY</original>
    <variation>AA</variation>
    <location>
        <begin position="207"/>
        <end position="208"/>
    </location>
</feature>
<feature type="mutagenesis site" description="Impairs VAPA and VAPB interaction. Does not affect endoplasmic reticulum membrane location of VAPA, VAPB and MOSPD2. Is unable to make ER-endosome contacts. Does not accumulate cholesterol in late endosomes (LEs). Does not interact with MOSPD2." evidence="18">
    <original>S</original>
    <variation>A</variation>
    <location>
        <position position="209"/>
    </location>
</feature>
<feature type="mutagenesis site" description="Does not affect VAPA and VAPB interactions; when associated with A-210. Does not interact with VAPA and VAPB. Recruits VAPA and VAPB around the endosome; when associated with A-210. Restores cholesterol accumulation in late endosomes; when associated with A-210. Moderately interacts with MOSPD2. Almost impairs interaction with MOSPD2; when associated with A-210." evidence="18">
    <original>S</original>
    <variation>D</variation>
    <location>
        <position position="209"/>
    </location>
</feature>
<feature type="mutagenesis site" description="Does not affect VAPA and VAPB interactions; when associated with D-209. Improve VAPA interaction. Does not interact with VAPA and VAPB. Recruits VAPA and VAPB around the endosome; when associated with D-209. Restores cholesterol accumulation in late endosomes; when associated with A-209. Almost impairs interaction with MOSPD2; when associated with A-209." evidence="18">
    <original>P</original>
    <variation>A</variation>
    <location>
        <position position="210"/>
    </location>
</feature>
<feature type="mutagenesis site" description="Does not affect localization to late endosomes." evidence="4">
    <original>N</original>
    <variation>A</variation>
    <location>
        <position position="219"/>
    </location>
</feature>
<feature type="mutagenesis site" description="Abolishes ability to transfer cholesterol between membranes." evidence="16">
    <original>MVLWN</original>
    <variation>NVLWD</variation>
    <location>
        <begin position="307"/>
        <end position="311"/>
    </location>
</feature>
<feature type="mutagenesis site" description="Does not affect localization to late endosomes." evidence="4">
    <original>N</original>
    <variation>A</variation>
    <location>
        <position position="311"/>
    </location>
</feature>
<feature type="helix" evidence="34">
    <location>
        <begin position="233"/>
        <end position="254"/>
    </location>
</feature>
<feature type="helix" evidence="34">
    <location>
        <begin position="255"/>
        <end position="258"/>
    </location>
</feature>
<feature type="strand" evidence="34">
    <location>
        <begin position="260"/>
        <end position="264"/>
    </location>
</feature>
<feature type="strand" evidence="34">
    <location>
        <begin position="270"/>
        <end position="276"/>
    </location>
</feature>
<feature type="turn" evidence="34">
    <location>
        <begin position="277"/>
        <end position="279"/>
    </location>
</feature>
<feature type="strand" evidence="34">
    <location>
        <begin position="280"/>
        <end position="291"/>
    </location>
</feature>
<feature type="helix" evidence="34">
    <location>
        <begin position="293"/>
        <end position="300"/>
    </location>
</feature>
<feature type="helix" evidence="34">
    <location>
        <begin position="304"/>
        <end position="310"/>
    </location>
</feature>
<feature type="strand" evidence="34">
    <location>
        <begin position="314"/>
        <end position="323"/>
    </location>
</feature>
<feature type="turn" evidence="34">
    <location>
        <begin position="324"/>
        <end position="326"/>
    </location>
</feature>
<feature type="strand" evidence="34">
    <location>
        <begin position="327"/>
        <end position="334"/>
    </location>
</feature>
<feature type="strand" evidence="34">
    <location>
        <begin position="340"/>
        <end position="342"/>
    </location>
</feature>
<feature type="strand" evidence="34">
    <location>
        <begin position="345"/>
        <end position="355"/>
    </location>
</feature>
<feature type="strand" evidence="34">
    <location>
        <begin position="357"/>
        <end position="366"/>
    </location>
</feature>
<feature type="strand" evidence="34">
    <location>
        <begin position="378"/>
        <end position="380"/>
    </location>
</feature>
<feature type="strand" evidence="34">
    <location>
        <begin position="385"/>
        <end position="392"/>
    </location>
</feature>
<feature type="strand" evidence="34">
    <location>
        <begin position="400"/>
        <end position="406"/>
    </location>
</feature>
<feature type="strand" evidence="34">
    <location>
        <begin position="412"/>
        <end position="414"/>
    </location>
</feature>
<feature type="helix" evidence="34">
    <location>
        <begin position="416"/>
        <end position="443"/>
    </location>
</feature>
<dbReference type="EMBL" id="X80198">
    <property type="protein sequence ID" value="CAA56489.1"/>
    <property type="molecule type" value="mRNA"/>
</dbReference>
<dbReference type="EMBL" id="D38255">
    <property type="protein sequence ID" value="BAA22525.1"/>
    <property type="molecule type" value="mRNA"/>
</dbReference>
<dbReference type="EMBL" id="BT006964">
    <property type="protein sequence ID" value="AAP35610.1"/>
    <property type="molecule type" value="mRNA"/>
</dbReference>
<dbReference type="EMBL" id="AK300176">
    <property type="protein sequence ID" value="BAG61955.1"/>
    <property type="molecule type" value="mRNA"/>
</dbReference>
<dbReference type="EMBL" id="AK300842">
    <property type="protein sequence ID" value="BAG62493.1"/>
    <property type="molecule type" value="mRNA"/>
</dbReference>
<dbReference type="EMBL" id="AC087491">
    <property type="status" value="NOT_ANNOTATED_CDS"/>
    <property type="molecule type" value="Genomic_DNA"/>
</dbReference>
<dbReference type="EMBL" id="BC008356">
    <property type="protein sequence ID" value="AAH08356.1"/>
    <property type="molecule type" value="mRNA"/>
</dbReference>
<dbReference type="EMBL" id="BC008747">
    <property type="protein sequence ID" value="AAH08747.1"/>
    <property type="molecule type" value="mRNA"/>
</dbReference>
<dbReference type="EMBL" id="BC025679">
    <property type="protein sequence ID" value="AAH25679.1"/>
    <property type="molecule type" value="mRNA"/>
</dbReference>
<dbReference type="CCDS" id="CCDS11341.1">
    <molecule id="Q14849-1"/>
</dbReference>
<dbReference type="CCDS" id="CCDS54117.1">
    <molecule id="Q14849-3"/>
</dbReference>
<dbReference type="CCDS" id="CCDS54118.1">
    <molecule id="Q14849-2"/>
</dbReference>
<dbReference type="PIR" id="I38027">
    <property type="entry name" value="I38027"/>
</dbReference>
<dbReference type="RefSeq" id="NP_001159409.1">
    <molecule id="Q14849-3"/>
    <property type="nucleotide sequence ID" value="NM_001165937.2"/>
</dbReference>
<dbReference type="RefSeq" id="NP_001159410.1">
    <molecule id="Q14849-2"/>
    <property type="nucleotide sequence ID" value="NM_001165938.2"/>
</dbReference>
<dbReference type="RefSeq" id="NP_006795.3">
    <molecule id="Q14849-1"/>
    <property type="nucleotide sequence ID" value="NM_006804.3"/>
</dbReference>
<dbReference type="RefSeq" id="XP_016879530.1">
    <molecule id="Q14849-1"/>
    <property type="nucleotide sequence ID" value="XM_017024041.3"/>
</dbReference>
<dbReference type="RefSeq" id="XP_047291121.1">
    <molecule id="Q14849-1"/>
    <property type="nucleotide sequence ID" value="XM_047435165.1"/>
</dbReference>
<dbReference type="PDB" id="1EM2">
    <property type="method" value="X-ray"/>
    <property type="resolution" value="2.20 A"/>
    <property type="chains" value="A=216-444"/>
</dbReference>
<dbReference type="PDB" id="5I9J">
    <property type="method" value="X-ray"/>
    <property type="resolution" value="1.74 A"/>
    <property type="chains" value="A=216-444"/>
</dbReference>
<dbReference type="PDB" id="6TQR">
    <property type="method" value="X-ray"/>
    <property type="resolution" value="1.85 A"/>
    <property type="chains" value="E/F=200-216"/>
</dbReference>
<dbReference type="PDB" id="6TQU">
    <property type="method" value="X-ray"/>
    <property type="resolution" value="2.40 A"/>
    <property type="chains" value="C/D=196-216"/>
</dbReference>
<dbReference type="PDBsum" id="1EM2"/>
<dbReference type="PDBsum" id="5I9J"/>
<dbReference type="PDBsum" id="6TQR"/>
<dbReference type="PDBsum" id="6TQU"/>
<dbReference type="SMR" id="Q14849"/>
<dbReference type="BioGRID" id="116148">
    <property type="interactions" value="100"/>
</dbReference>
<dbReference type="FunCoup" id="Q14849">
    <property type="interactions" value="3278"/>
</dbReference>
<dbReference type="IntAct" id="Q14849">
    <property type="interactions" value="63"/>
</dbReference>
<dbReference type="STRING" id="9606.ENSP00000337446"/>
<dbReference type="BindingDB" id="Q14849"/>
<dbReference type="ChEMBL" id="CHEMBL4523297"/>
<dbReference type="SwissLipids" id="SLP:000000712"/>
<dbReference type="TCDB" id="8.A.120.2.1">
    <property type="family name" value="the mitochondrial star-related lipid transfer protein (star) family"/>
</dbReference>
<dbReference type="iPTMnet" id="Q14849"/>
<dbReference type="MetOSite" id="Q14849"/>
<dbReference type="PhosphoSitePlus" id="Q14849"/>
<dbReference type="BioMuta" id="STARD3"/>
<dbReference type="DMDM" id="116242802"/>
<dbReference type="jPOST" id="Q14849"/>
<dbReference type="MassIVE" id="Q14849"/>
<dbReference type="PaxDb" id="9606-ENSP00000337446"/>
<dbReference type="PeptideAtlas" id="Q14849"/>
<dbReference type="ProteomicsDB" id="25332"/>
<dbReference type="ProteomicsDB" id="60208">
    <molecule id="Q14849-1"/>
</dbReference>
<dbReference type="ProteomicsDB" id="60209">
    <molecule id="Q14849-2"/>
</dbReference>
<dbReference type="Pumba" id="Q14849"/>
<dbReference type="Antibodypedia" id="28306">
    <property type="antibodies" value="77 antibodies from 23 providers"/>
</dbReference>
<dbReference type="DNASU" id="10948"/>
<dbReference type="Ensembl" id="ENST00000336308.10">
    <molecule id="Q14849-1"/>
    <property type="protein sequence ID" value="ENSP00000337446.5"/>
    <property type="gene ID" value="ENSG00000131748.16"/>
</dbReference>
<dbReference type="Ensembl" id="ENST00000394250.8">
    <molecule id="Q14849-2"/>
    <property type="protein sequence ID" value="ENSP00000377794.4"/>
    <property type="gene ID" value="ENSG00000131748.16"/>
</dbReference>
<dbReference type="Ensembl" id="ENST00000544210.6">
    <molecule id="Q14849-3"/>
    <property type="protein sequence ID" value="ENSP00000439869.2"/>
    <property type="gene ID" value="ENSG00000131748.16"/>
</dbReference>
<dbReference type="GeneID" id="10948"/>
<dbReference type="KEGG" id="hsa:10948"/>
<dbReference type="MANE-Select" id="ENST00000336308.10">
    <property type="protein sequence ID" value="ENSP00000337446.5"/>
    <property type="RefSeq nucleotide sequence ID" value="NM_006804.4"/>
    <property type="RefSeq protein sequence ID" value="NP_006795.3"/>
</dbReference>
<dbReference type="UCSC" id="uc002hsd.4">
    <molecule id="Q14849-1"/>
    <property type="organism name" value="human"/>
</dbReference>
<dbReference type="AGR" id="HGNC:17579"/>
<dbReference type="CTD" id="10948"/>
<dbReference type="DisGeNET" id="10948"/>
<dbReference type="GeneCards" id="STARD3"/>
<dbReference type="HGNC" id="HGNC:17579">
    <property type="gene designation" value="STARD3"/>
</dbReference>
<dbReference type="HPA" id="ENSG00000131748">
    <property type="expression patterns" value="Low tissue specificity"/>
</dbReference>
<dbReference type="MIM" id="607048">
    <property type="type" value="gene"/>
</dbReference>
<dbReference type="neXtProt" id="NX_Q14849"/>
<dbReference type="OpenTargets" id="ENSG00000131748"/>
<dbReference type="PharmGKB" id="PA134981867"/>
<dbReference type="VEuPathDB" id="HostDB:ENSG00000131748"/>
<dbReference type="eggNOG" id="KOG3845">
    <property type="taxonomic scope" value="Eukaryota"/>
</dbReference>
<dbReference type="GeneTree" id="ENSGT00940000159051"/>
<dbReference type="HOGENOM" id="CLU_033480_0_0_1"/>
<dbReference type="InParanoid" id="Q14849"/>
<dbReference type="OMA" id="AYHMQYD"/>
<dbReference type="OrthoDB" id="5912992at2759"/>
<dbReference type="PAN-GO" id="Q14849">
    <property type="GO annotations" value="6 GO annotations based on evolutionary models"/>
</dbReference>
<dbReference type="PhylomeDB" id="Q14849"/>
<dbReference type="TreeFam" id="TF313869"/>
<dbReference type="PathwayCommons" id="Q14849"/>
<dbReference type="Reactome" id="R-HSA-196108">
    <property type="pathway name" value="Pregnenolone biosynthesis"/>
</dbReference>
<dbReference type="SignaLink" id="Q14849"/>
<dbReference type="BioGRID-ORCS" id="10948">
    <property type="hits" value="20 hits in 1150 CRISPR screens"/>
</dbReference>
<dbReference type="ChiTaRS" id="STARD3">
    <property type="organism name" value="human"/>
</dbReference>
<dbReference type="EvolutionaryTrace" id="Q14849"/>
<dbReference type="GenomeRNAi" id="10948"/>
<dbReference type="Pharos" id="Q14849">
    <property type="development level" value="Tbio"/>
</dbReference>
<dbReference type="PRO" id="PR:Q14849"/>
<dbReference type="Proteomes" id="UP000005640">
    <property type="component" value="Chromosome 17"/>
</dbReference>
<dbReference type="RNAct" id="Q14849">
    <property type="molecule type" value="protein"/>
</dbReference>
<dbReference type="Bgee" id="ENSG00000131748">
    <property type="expression patterns" value="Expressed in right lung and 174 other cell types or tissues"/>
</dbReference>
<dbReference type="ExpressionAtlas" id="Q14849">
    <property type="expression patterns" value="baseline and differential"/>
</dbReference>
<dbReference type="GO" id="GO:0005737">
    <property type="term" value="C:cytoplasm"/>
    <property type="evidence" value="ECO:0000304"/>
    <property type="project" value="ProtInc"/>
</dbReference>
<dbReference type="GO" id="GO:0005829">
    <property type="term" value="C:cytosol"/>
    <property type="evidence" value="ECO:0000304"/>
    <property type="project" value="Reactome"/>
</dbReference>
<dbReference type="GO" id="GO:0140284">
    <property type="term" value="C:endoplasmic reticulum-endosome membrane contact site"/>
    <property type="evidence" value="ECO:0000314"/>
    <property type="project" value="UniProtKB"/>
</dbReference>
<dbReference type="GO" id="GO:0005768">
    <property type="term" value="C:endosome"/>
    <property type="evidence" value="ECO:0000314"/>
    <property type="project" value="UniProtKB"/>
</dbReference>
<dbReference type="GO" id="GO:0043231">
    <property type="term" value="C:intracellular membrane-bounded organelle"/>
    <property type="evidence" value="ECO:0000314"/>
    <property type="project" value="HPA"/>
</dbReference>
<dbReference type="GO" id="GO:0031902">
    <property type="term" value="C:late endosome membrane"/>
    <property type="evidence" value="ECO:0000314"/>
    <property type="project" value="UniProtKB"/>
</dbReference>
<dbReference type="GO" id="GO:0005765">
    <property type="term" value="C:lysosomal membrane"/>
    <property type="evidence" value="ECO:0007005"/>
    <property type="project" value="UniProtKB"/>
</dbReference>
<dbReference type="GO" id="GO:0005739">
    <property type="term" value="C:mitochondrion"/>
    <property type="evidence" value="ECO:0007669"/>
    <property type="project" value="Ensembl"/>
</dbReference>
<dbReference type="GO" id="GO:0005654">
    <property type="term" value="C:nucleoplasm"/>
    <property type="evidence" value="ECO:0000314"/>
    <property type="project" value="HPA"/>
</dbReference>
<dbReference type="GO" id="GO:0044232">
    <property type="term" value="C:organelle membrane contact site"/>
    <property type="evidence" value="ECO:0000314"/>
    <property type="project" value="UniProtKB"/>
</dbReference>
<dbReference type="GO" id="GO:0015485">
    <property type="term" value="F:cholesterol binding"/>
    <property type="evidence" value="ECO:0000314"/>
    <property type="project" value="UniProtKB"/>
</dbReference>
<dbReference type="GO" id="GO:0120020">
    <property type="term" value="F:cholesterol transfer activity"/>
    <property type="evidence" value="ECO:0007669"/>
    <property type="project" value="InterPro"/>
</dbReference>
<dbReference type="GO" id="GO:0042803">
    <property type="term" value="F:protein homodimerization activity"/>
    <property type="evidence" value="ECO:0000314"/>
    <property type="project" value="UniProtKB"/>
</dbReference>
<dbReference type="GO" id="GO:0008203">
    <property type="term" value="P:cholesterol metabolic process"/>
    <property type="evidence" value="ECO:0000304"/>
    <property type="project" value="ProtInc"/>
</dbReference>
<dbReference type="GO" id="GO:0030301">
    <property type="term" value="P:cholesterol transport"/>
    <property type="evidence" value="ECO:0000314"/>
    <property type="project" value="UniProtKB"/>
</dbReference>
<dbReference type="GO" id="GO:0006629">
    <property type="term" value="P:lipid metabolic process"/>
    <property type="evidence" value="ECO:0000304"/>
    <property type="project" value="ProtInc"/>
</dbReference>
<dbReference type="GO" id="GO:0006839">
    <property type="term" value="P:mitochondrial transport"/>
    <property type="evidence" value="ECO:0000304"/>
    <property type="project" value="ProtInc"/>
</dbReference>
<dbReference type="GO" id="GO:0006701">
    <property type="term" value="P:progesterone biosynthetic process"/>
    <property type="evidence" value="ECO:0007669"/>
    <property type="project" value="Ensembl"/>
</dbReference>
<dbReference type="GO" id="GO:0008202">
    <property type="term" value="P:steroid metabolic process"/>
    <property type="evidence" value="ECO:0000304"/>
    <property type="project" value="ProtInc"/>
</dbReference>
<dbReference type="GO" id="GO:0099044">
    <property type="term" value="P:vesicle tethering to endoplasmic reticulum"/>
    <property type="evidence" value="ECO:0000314"/>
    <property type="project" value="UniProtKB"/>
</dbReference>
<dbReference type="CDD" id="cd08906">
    <property type="entry name" value="START_STARD3-like"/>
    <property type="match status" value="1"/>
</dbReference>
<dbReference type="DisProt" id="DP02835"/>
<dbReference type="FunFam" id="3.30.530.20:FF:000014">
    <property type="entry name" value="stAR-related lipid transfer protein 3 isoform X2"/>
    <property type="match status" value="1"/>
</dbReference>
<dbReference type="Gene3D" id="3.30.530.20">
    <property type="match status" value="1"/>
</dbReference>
<dbReference type="InterPro" id="IPR019498">
    <property type="entry name" value="MENTAL"/>
</dbReference>
<dbReference type="InterPro" id="IPR000799">
    <property type="entry name" value="StAR-like"/>
</dbReference>
<dbReference type="InterPro" id="IPR051869">
    <property type="entry name" value="STARD3"/>
</dbReference>
<dbReference type="InterPro" id="IPR029867">
    <property type="entry name" value="STARD3_MLN64_C"/>
</dbReference>
<dbReference type="InterPro" id="IPR023393">
    <property type="entry name" value="START-like_dom_sf"/>
</dbReference>
<dbReference type="InterPro" id="IPR002913">
    <property type="entry name" value="START_lipid-bd_dom"/>
</dbReference>
<dbReference type="PANTHER" id="PTHR46121:SF2">
    <property type="entry name" value="STAR-RELATED LIPID TRANSFER PROTEIN 3"/>
    <property type="match status" value="1"/>
</dbReference>
<dbReference type="PANTHER" id="PTHR46121">
    <property type="entry name" value="STEROIDOGENIC ACUTE REGULATORY PROTEIN-LIKE"/>
    <property type="match status" value="1"/>
</dbReference>
<dbReference type="Pfam" id="PF10457">
    <property type="entry name" value="MENTAL"/>
    <property type="match status" value="1"/>
</dbReference>
<dbReference type="Pfam" id="PF01852">
    <property type="entry name" value="START"/>
    <property type="match status" value="1"/>
</dbReference>
<dbReference type="PRINTS" id="PR00978">
    <property type="entry name" value="STARPROTEIN"/>
</dbReference>
<dbReference type="SMART" id="SM00234">
    <property type="entry name" value="START"/>
    <property type="match status" value="1"/>
</dbReference>
<dbReference type="SUPFAM" id="SSF55961">
    <property type="entry name" value="Bet v1-like"/>
    <property type="match status" value="1"/>
</dbReference>
<dbReference type="PROSITE" id="PS51439">
    <property type="entry name" value="MENTAL"/>
    <property type="match status" value="1"/>
</dbReference>
<dbReference type="PROSITE" id="PS50848">
    <property type="entry name" value="START"/>
    <property type="match status" value="1"/>
</dbReference>
<evidence type="ECO:0000255" key="1"/>
<evidence type="ECO:0000255" key="2">
    <source>
        <dbReference type="PROSITE-ProRule" id="PRU00197"/>
    </source>
</evidence>
<evidence type="ECO:0000255" key="3">
    <source>
        <dbReference type="PROSITE-ProRule" id="PRU00770"/>
    </source>
</evidence>
<evidence type="ECO:0000269" key="4">
    <source>
    </source>
</evidence>
<evidence type="ECO:0000269" key="5">
    <source>
    </source>
</evidence>
<evidence type="ECO:0000269" key="6">
    <source>
    </source>
</evidence>
<evidence type="ECO:0000269" key="7">
    <source>
    </source>
</evidence>
<evidence type="ECO:0000269" key="8">
    <source>
    </source>
</evidence>
<evidence type="ECO:0000269" key="9">
    <source>
    </source>
</evidence>
<evidence type="ECO:0000269" key="10">
    <source>
    </source>
</evidence>
<evidence type="ECO:0000269" key="11">
    <source>
    </source>
</evidence>
<evidence type="ECO:0000269" key="12">
    <source>
    </source>
</evidence>
<evidence type="ECO:0000269" key="13">
    <source>
    </source>
</evidence>
<evidence type="ECO:0000269" key="14">
    <source>
    </source>
</evidence>
<evidence type="ECO:0000269" key="15">
    <source>
    </source>
</evidence>
<evidence type="ECO:0000269" key="16">
    <source>
    </source>
</evidence>
<evidence type="ECO:0000269" key="17">
    <source>
    </source>
</evidence>
<evidence type="ECO:0000269" key="18">
    <source>
    </source>
</evidence>
<evidence type="ECO:0000269" key="19">
    <source>
    </source>
</evidence>
<evidence type="ECO:0000269" key="20">
    <source>
    </source>
</evidence>
<evidence type="ECO:0000269" key="21">
    <source ref="3"/>
</evidence>
<evidence type="ECO:0000303" key="22">
    <source>
    </source>
</evidence>
<evidence type="ECO:0000303" key="23">
    <source>
    </source>
</evidence>
<evidence type="ECO:0000303" key="24">
    <source>
    </source>
</evidence>
<evidence type="ECO:0000303" key="25">
    <source>
    </source>
</evidence>
<evidence type="ECO:0000305" key="26"/>
<evidence type="ECO:0000305" key="27">
    <source>
    </source>
</evidence>
<evidence type="ECO:0000305" key="28">
    <source>
    </source>
</evidence>
<evidence type="ECO:0000312" key="29">
    <source>
        <dbReference type="HGNC" id="HGNC:17579"/>
    </source>
</evidence>
<evidence type="ECO:0007744" key="30">
    <source>
        <dbReference type="PDB" id="1EM2"/>
    </source>
</evidence>
<evidence type="ECO:0007744" key="31">
    <source>
        <dbReference type="PDB" id="5I9J"/>
    </source>
</evidence>
<evidence type="ECO:0007744" key="32">
    <source>
        <dbReference type="PDB" id="6TQR"/>
    </source>
</evidence>
<evidence type="ECO:0007744" key="33">
    <source>
        <dbReference type="PDB" id="6TQU"/>
    </source>
</evidence>
<evidence type="ECO:0007829" key="34">
    <source>
        <dbReference type="PDB" id="5I9J"/>
    </source>
</evidence>
<gene>
    <name evidence="29" type="primary">STARD3</name>
    <name evidence="25" type="synonym">CAB1</name>
    <name evidence="22" type="synonym">MLN64</name>
</gene>
<organism>
    <name type="scientific">Homo sapiens</name>
    <name type="common">Human</name>
    <dbReference type="NCBI Taxonomy" id="9606"/>
    <lineage>
        <taxon>Eukaryota</taxon>
        <taxon>Metazoa</taxon>
        <taxon>Chordata</taxon>
        <taxon>Craniata</taxon>
        <taxon>Vertebrata</taxon>
        <taxon>Euteleostomi</taxon>
        <taxon>Mammalia</taxon>
        <taxon>Eutheria</taxon>
        <taxon>Euarchontoglires</taxon>
        <taxon>Primates</taxon>
        <taxon>Haplorrhini</taxon>
        <taxon>Catarrhini</taxon>
        <taxon>Hominidae</taxon>
        <taxon>Homo</taxon>
    </lineage>
</organism>
<keyword id="KW-0002">3D-structure</keyword>
<keyword id="KW-0025">Alternative splicing</keyword>
<keyword id="KW-0967">Endosome</keyword>
<keyword id="KW-0445">Lipid transport</keyword>
<keyword id="KW-0446">Lipid-binding</keyword>
<keyword id="KW-0472">Membrane</keyword>
<keyword id="KW-0597">Phosphoprotein</keyword>
<keyword id="KW-1267">Proteomics identification</keyword>
<keyword id="KW-1185">Reference proteome</keyword>
<keyword id="KW-0812">Transmembrane</keyword>
<keyword id="KW-1133">Transmembrane helix</keyword>
<keyword id="KW-0813">Transport</keyword>
<accession>Q14849</accession>
<accession>A8MXA4</accession>
<accession>B4DUY1</accession>
<accession>F5H0G2</accession>
<accession>Q53Y53</accession>
<accession>Q96HM9</accession>
<comment type="function">
    <text evidence="4 5 9 11 12 13 14 16 18">Sterol-binding protein that mediates cholesterol transport from the endoplasmic reticulum to endosomes (PubMed:11053434, PubMed:15930133, PubMed:22514632, PubMed:28377464, PubMed:33124732). The sterol transport mechanism is triggered by phosphorylation of FFAT motif that leads to membrane tethering between the endoplasmic reticulum and late endosomes via interaction with VAPA and VAPB (PubMed:24105263, PubMed:28377464, PubMed:33124732). Acts as a lipid transfer protein that redirects sterol to the endosome at the expense of the cell membrane and favors membrane formation inside endosomes (PubMed:28377464). May also mediate cholesterol transport between other membranes, such as mitochondria membrane or cell membrane (PubMed:12070139, PubMed:19965586). However, such results need additional experimental evidences; probably mainly mediates cholesterol transport from the endoplasmic reticulum to endosomes (PubMed:28377464). Does not activate transcriptional cholesterol sensing (PubMed:28377464). Able to bind other lipids, such as lutein, a xanthophyll carotenoids that form the macular pigment of the retina (PubMed:21322544).</text>
</comment>
<comment type="catalytic activity">
    <reaction evidence="4 9 13 16 18">
        <text>cholesterol(in) = cholesterol(out)</text>
        <dbReference type="Rhea" id="RHEA:39747"/>
        <dbReference type="ChEBI" id="CHEBI:16113"/>
    </reaction>
</comment>
<comment type="subunit">
    <text evidence="8 10 14 16 17 18">Homodimer (PubMed:15718238, PubMed:16709157). Interacts (via the MENTAL domain) with STARD3NL (PubMed:15718238, PubMed:16709157). Interacts (via phosphorylated FFAT motif) with VAPA (via MSP domain) (PubMed:24105263, PubMed:28377464, PubMed:33124732). Interacts (via phosphorylated FFAT motif) with VAPB (via MSP domain) (PubMed:24105263, PubMed:28377464, PubMed:33124732). Interacts (via phosphorylated FFAT motif) with MOSPD2 (via MSP domain); this interaction allows enrichment of MOSPD2 around endosomes (PubMed:29858488, PubMed:33124732).</text>
</comment>
<comment type="interaction">
    <interactant intactId="EBI-9819324">
        <id>Q14849</id>
    </interactant>
    <interactant intactId="EBI-13059134">
        <id>Q13520</id>
        <label>AQP6</label>
    </interactant>
    <organismsDiffer>false</organismsDiffer>
    <experiments>3</experiments>
</comment>
<comment type="interaction">
    <interactant intactId="EBI-9819324">
        <id>Q14849</id>
    </interactant>
    <interactant intactId="EBI-9355611">
        <id>Q8N350</id>
        <label>CBARP</label>
    </interactant>
    <organismsDiffer>false</organismsDiffer>
    <experiments>2</experiments>
</comment>
<comment type="interaction">
    <interactant intactId="EBI-9819324">
        <id>Q14849</id>
    </interactant>
    <interactant intactId="EBI-349832">
        <id>Q9HD26</id>
        <label>GOPC</label>
    </interactant>
    <organismsDiffer>false</organismsDiffer>
    <experiments>3</experiments>
</comment>
<comment type="interaction">
    <interactant intactId="EBI-9819324">
        <id>Q14849</id>
    </interactant>
    <interactant intactId="EBI-2812848">
        <id>Q8NHP6</id>
        <label>MOSPD2</label>
    </interactant>
    <organismsDiffer>false</organismsDiffer>
    <experiments>6</experiments>
</comment>
<comment type="interaction">
    <interactant intactId="EBI-9819324">
        <id>Q14849</id>
    </interactant>
    <interactant intactId="EBI-12055631">
        <id>Q96K19-5</id>
        <label>RNF170</label>
    </interactant>
    <organismsDiffer>false</organismsDiffer>
    <experiments>3</experiments>
</comment>
<comment type="interaction">
    <interactant intactId="EBI-9819369">
        <id>Q14849-1</id>
    </interactant>
    <interactant intactId="EBI-1059156">
        <id>Q9P0L0</id>
        <label>VAPA</label>
    </interactant>
    <organismsDiffer>false</organismsDiffer>
    <experiments>4</experiments>
</comment>
<comment type="subcellular location">
    <subcellularLocation>
        <location evidence="4 10 14 16 17">Late endosome membrane</location>
        <topology evidence="1">Multi-pass membrane protein</topology>
    </subcellularLocation>
    <text evidence="14 17">Localizes to contact sites between the endoplasmic reticulum and late endosomes: associates with the endoplasmic reticulum membrane via interaction with VAPA, VAPB or MOSPD2.</text>
</comment>
<comment type="alternative products">
    <event type="alternative splicing"/>
    <isoform>
        <id>Q14849-1</id>
        <name>1</name>
        <sequence type="displayed"/>
    </isoform>
    <isoform>
        <id>Q14849-2</id>
        <name>2</name>
        <sequence type="described" ref="VSP_042710"/>
    </isoform>
    <isoform>
        <id>Q14849-3</id>
        <name>3</name>
        <sequence type="described" ref="VSP_045361"/>
    </isoform>
</comment>
<comment type="tissue specificity">
    <text evidence="12">Expressed in retina.</text>
</comment>
<comment type="induction">
    <text evidence="15">Not regulated by increases in total cholesterol content, or by marked alterations in cholesterol flux.</text>
</comment>
<comment type="domain">
    <text evidence="14 17">The FFAT motif mediates interaction with VAPA, VAPB and MOSPD2.</text>
</comment>
<comment type="domain">
    <text evidence="28">The START domain mediates lipid-transfer between membranes. It contains a hydrophobic cavity able to accommodate one lipid molecule, thereby serving as a 'hydrophobic bridge' across the aqueous gap between donor and acceptor organelle membranes.</text>
</comment>
<comment type="domain">
    <text evidence="4 8 10">The MENTAL domain anchors the protein in endosome membranes and exposes the START domain in the cytosol (PubMed:11053434). It binds cholesterol and mediates homotypic as well as heterotypic interactions between STARD3 and STARD3NL (PubMed:15718238, PubMed:16709157).</text>
</comment>
<comment type="PTM">
    <text evidence="18">Phosphorylation at Ser-209 is necessary and sufficient for the direct interaction of the phosphorylated FFAT motif with the MSP domain of MOSPD2, VAPA and VAPB and allows the tethering of two membranes that participates in the formation of ER-endosome contacts (PubMed:33124732). Phosphorylation of the FFAT motif leads to conformation changes (PubMed:33124732). Additional phosphorylations around the core FFAT motif (QFYSPPE) are not essential but strengthen the interaction with MOSPD2, VAPA and VAPB (PubMed:33124732). Phosphorylation at Ser-209 of FFAT motif drives membrane tethering between the endoplasmic reticulum and late endosomes via interaction with VAPA and VAPB that in turn allows the efficient transport of sterol mediated by the START domain (PubMed:33124732).</text>
</comment>
<comment type="similarity">
    <text evidence="26">Belongs to the STARD3 family.</text>
</comment>
<comment type="caution">
    <text evidence="4 5 11 16">STARD3 was reported to function in cholesterol transport to the mitochondria or to the cell membrane (PubMed:12070139, PubMed:19965586). Other reports however showed that it mediates cholesterol transport from the endoplasmic reticulum to endosomes (PubMed:11053434, PubMed:28377464). Discrepancies may be due to the different cell type used and the cellular physiological state (PubMed:28377464).</text>
</comment>
<comment type="online information" name="Atlas of Genetics and Cytogenetics in Oncology and Haematology">
    <link uri="https://atlasgeneticsoncology.org/gene/202/MLN64"/>
</comment>
<protein>
    <recommendedName>
        <fullName evidence="26">StAR-related lipid transfer protein 3</fullName>
    </recommendedName>
    <alternativeName>
        <fullName evidence="22">Metastatic lymph node gene 64 protein</fullName>
        <shortName evidence="22">MLN 64</shortName>
    </alternativeName>
    <alternativeName>
        <fullName evidence="25">Protein CAB1</fullName>
    </alternativeName>
    <alternativeName>
        <fullName evidence="24">START domain-containing protein 3</fullName>
        <shortName evidence="24">StARD3</shortName>
    </alternativeName>
</protein>